<dbReference type="EMBL" id="AF241269">
    <property type="protein sequence ID" value="AAF97048.1"/>
    <property type="molecule type" value="mRNA"/>
</dbReference>
<dbReference type="EMBL" id="AF513508">
    <property type="protein sequence ID" value="AAM49598.1"/>
    <property type="molecule type" value="mRNA"/>
</dbReference>
<dbReference type="EMBL" id="JN968971">
    <property type="protein sequence ID" value="AFR43267.1"/>
    <property type="molecule type" value="Genomic_DNA"/>
</dbReference>
<dbReference type="EMBL" id="JN968972">
    <property type="protein sequence ID" value="AFR43268.1"/>
    <property type="molecule type" value="Genomic_DNA"/>
</dbReference>
<dbReference type="SMR" id="Q9NBW2"/>
<dbReference type="GO" id="GO:0005576">
    <property type="term" value="C:extracellular region"/>
    <property type="evidence" value="ECO:0007669"/>
    <property type="project" value="UniProtKB-SubCell"/>
</dbReference>
<dbReference type="GO" id="GO:0019871">
    <property type="term" value="F:sodium channel inhibitor activity"/>
    <property type="evidence" value="ECO:0007669"/>
    <property type="project" value="InterPro"/>
</dbReference>
<dbReference type="GO" id="GO:0090729">
    <property type="term" value="F:toxin activity"/>
    <property type="evidence" value="ECO:0007669"/>
    <property type="project" value="UniProtKB-KW"/>
</dbReference>
<dbReference type="CDD" id="cd23106">
    <property type="entry name" value="neurotoxins_LC_scorpion"/>
    <property type="match status" value="1"/>
</dbReference>
<dbReference type="Gene3D" id="3.30.30.10">
    <property type="entry name" value="Knottin, scorpion toxin-like"/>
    <property type="match status" value="1"/>
</dbReference>
<dbReference type="InterPro" id="IPR044062">
    <property type="entry name" value="LCN-type_CS_alpha_beta_dom"/>
</dbReference>
<dbReference type="InterPro" id="IPR036574">
    <property type="entry name" value="Scorpion_toxin-like_sf"/>
</dbReference>
<dbReference type="InterPro" id="IPR018218">
    <property type="entry name" value="Scorpion_toxinL"/>
</dbReference>
<dbReference type="InterPro" id="IPR002061">
    <property type="entry name" value="Scorpion_toxinL/defensin"/>
</dbReference>
<dbReference type="Pfam" id="PF00537">
    <property type="entry name" value="Toxin_3"/>
    <property type="match status" value="1"/>
</dbReference>
<dbReference type="PRINTS" id="PR00285">
    <property type="entry name" value="SCORPNTOXIN"/>
</dbReference>
<dbReference type="SUPFAM" id="SSF57095">
    <property type="entry name" value="Scorpion toxin-like"/>
    <property type="match status" value="1"/>
</dbReference>
<dbReference type="PROSITE" id="PS51863">
    <property type="entry name" value="LCN_CSAB"/>
    <property type="match status" value="1"/>
</dbReference>
<accession>Q9NBW2</accession>
<accession>M4HP96</accession>
<name>SCBT_OLIMR</name>
<sequence length="83" mass="9378">MKAALLLVIFSLMLIGVLTKKSGYPTDHEGCKNWCVLNHSCGILCEGYGGSGYCYFWKLACWCDDIHNWVPTWSRATNKCRAK</sequence>
<keyword id="KW-0903">Direct protein sequencing</keyword>
<keyword id="KW-1015">Disulfide bond</keyword>
<keyword id="KW-0872">Ion channel impairing toxin</keyword>
<keyword id="KW-0528">Neurotoxin</keyword>
<keyword id="KW-0964">Secreted</keyword>
<keyword id="KW-0732">Signal</keyword>
<keyword id="KW-0800">Toxin</keyword>
<keyword id="KW-0738">Voltage-gated sodium channel impairing toxin</keyword>
<feature type="signal peptide" evidence="2">
    <location>
        <begin position="1"/>
        <end position="19"/>
    </location>
</feature>
<feature type="chain" id="PRO_0000035257" description="Toxin BmKBT">
    <location>
        <begin position="20"/>
        <end position="82"/>
    </location>
</feature>
<feature type="propeptide" id="PRO_0000035258" description="Removed by a carboxypeptidase" evidence="5">
    <location>
        <position position="83"/>
    </location>
</feature>
<feature type="domain" description="LCN-type CS-alpha/beta" evidence="1">
    <location>
        <begin position="21"/>
        <end position="81"/>
    </location>
</feature>
<feature type="disulfide bond" evidence="1">
    <location>
        <begin position="31"/>
        <end position="80"/>
    </location>
</feature>
<feature type="disulfide bond" evidence="1">
    <location>
        <begin position="35"/>
        <end position="54"/>
    </location>
</feature>
<feature type="disulfide bond" evidence="1">
    <location>
        <begin position="41"/>
        <end position="61"/>
    </location>
</feature>
<feature type="disulfide bond" evidence="1">
    <location>
        <begin position="45"/>
        <end position="63"/>
    </location>
</feature>
<protein>
    <recommendedName>
        <fullName>Toxin BmKBT</fullName>
        <shortName>BmK BT</shortName>
    </recommendedName>
    <alternativeName>
        <fullName>BmKabT</fullName>
        <shortName>BmK abT</shortName>
    </alternativeName>
</protein>
<comment type="function">
    <text evidence="2 3">This toxin increases the peak sodium current, slows down the inactivation of sodium channels (Nav), and prolongs the action potential of dorsal root ganglion neurons, which indicates that it behaves as a classical alpha-toxin. It binds to mammal brain and insect sodium channels, but with a different manner. This peptide may bind to a distinct receptor site on mammal brain sodium channels, which is unconnected with that for BmKAS (a beta-toxin), BmKIT2 (a beta-toxin) or BmK I (an alpha toxin). In contrast, the receptor site for BmKabT on insect sodium channels might be closely related to that for the beta-insect depressant toxin BmKIT2. Possesses potent toxicity in mice but induces only paralysis in cotton bollworm.</text>
</comment>
<comment type="subcellular location">
    <subcellularLocation>
        <location>Secreted</location>
    </subcellularLocation>
</comment>
<comment type="tissue specificity">
    <text>Expressed by the venom gland.</text>
</comment>
<comment type="domain">
    <text evidence="5">Has the structural arrangement of an alpha-helix connected to antiparallel beta-sheets by disulfide bonds (CS-alpha/beta).</text>
</comment>
<comment type="mass spectrometry" mass="7212.0" method="Electrospray" evidence="2"/>
<comment type="toxic dose">
    <text evidence="2">LD(50) is 75 ug/kg by intracerebroventricular injection into mice.</text>
</comment>
<comment type="toxic dose">
    <text evidence="4">LD(50) is 150 ug/kg by subcutaneous injection into mice.</text>
</comment>
<comment type="similarity">
    <text evidence="5">Belongs to the long (4 C-C) scorpion toxin superfamily. Sodium channel inhibitor family. Beta subfamily.</text>
</comment>
<comment type="caution">
    <text evidence="5">This toxin is functionally similar to alpha toxins and structurally similar to beta toxins.</text>
</comment>
<proteinExistence type="evidence at protein level"/>
<evidence type="ECO:0000255" key="1">
    <source>
        <dbReference type="PROSITE-ProRule" id="PRU01210"/>
    </source>
</evidence>
<evidence type="ECO:0000269" key="2">
    <source>
    </source>
</evidence>
<evidence type="ECO:0000269" key="3">
    <source>
    </source>
</evidence>
<evidence type="ECO:0000269" key="4">
    <source>
    </source>
</evidence>
<evidence type="ECO:0000305" key="5"/>
<reference key="1">
    <citation type="journal article" date="2000" name="FEBS Lett.">
        <title>Purification, cDNA cloning and function assessment of BmK abT, a unique component from the Old World scorpion species.</title>
        <authorList>
            <person name="Ye J.-G."/>
            <person name="Wang C.-Y."/>
            <person name="Li Y.-J."/>
            <person name="Tan Z.-Y."/>
            <person name="Yan Y.-P."/>
            <person name="Li C."/>
            <person name="Chen J."/>
            <person name="Ji Y.-H."/>
        </authorList>
    </citation>
    <scope>NUCLEOTIDE SEQUENCE [MRNA]</scope>
    <scope>PROTEIN SEQUENCE OF 20-59</scope>
    <scope>FUNCTION</scope>
    <scope>TOXIC DOSE</scope>
    <scope>MASS SPECTROMETRY</scope>
    <source>
        <tissue>Venom</tissue>
        <tissue>Venom gland</tissue>
    </source>
</reference>
<reference key="2">
    <citation type="journal article" date="2001" name="Toxicon">
        <title>Molecular cloning and sequence analysis of cDNAs encoding a beta-toxin-like peptide and two MkTx I homologues from scorpion Buthus martensii Karsch.</title>
        <authorList>
            <person name="Zeng X.-C."/>
            <person name="Li W.-X."/>
            <person name="Zhu S.-Y."/>
            <person name="Peng F."/>
            <person name="Zhu Z.-H."/>
            <person name="Liu H."/>
            <person name="Mao X."/>
        </authorList>
    </citation>
    <scope>NUCLEOTIDE SEQUENCE [MRNA]</scope>
</reference>
<reference key="3">
    <citation type="journal article" date="2012" name="Peptides">
        <title>Tremendous intron length differences of the BmKBT and a novel BmKBT-like peptide genes provide a mechanical basis for the rapid or constitutive expression of the peptides.</title>
        <authorList>
            <person name="Nie Y."/>
            <person name="Zeng X.C."/>
            <person name="Luo X."/>
            <person name="Wu S."/>
            <person name="Zhang L."/>
            <person name="Cao H."/>
            <person name="Zhou J."/>
            <person name="Zhou L."/>
        </authorList>
    </citation>
    <scope>NUCLEOTIDE SEQUENCE [GENOMIC DNA]</scope>
    <scope>BIOASSAY</scope>
    <scope>TOXIC DOSE</scope>
</reference>
<reference key="4">
    <citation type="journal article" date="2002" name="Eur. J. Pharmacol.">
        <title>The binding of BmK abT, a unique neurotoxin, to mammal brain and insect Na(+) channels using biosensor.</title>
        <authorList>
            <person name="Ji Y.-H."/>
            <person name="Wang W.-X."/>
            <person name="Wang Q."/>
            <person name="Huang Y.-P."/>
        </authorList>
    </citation>
    <scope>FUNCTION</scope>
</reference>
<organism>
    <name type="scientific">Olivierus martensii</name>
    <name type="common">Manchurian scorpion</name>
    <name type="synonym">Mesobuthus martensii</name>
    <dbReference type="NCBI Taxonomy" id="34649"/>
    <lineage>
        <taxon>Eukaryota</taxon>
        <taxon>Metazoa</taxon>
        <taxon>Ecdysozoa</taxon>
        <taxon>Arthropoda</taxon>
        <taxon>Chelicerata</taxon>
        <taxon>Arachnida</taxon>
        <taxon>Scorpiones</taxon>
        <taxon>Buthida</taxon>
        <taxon>Buthoidea</taxon>
        <taxon>Buthidae</taxon>
        <taxon>Olivierus</taxon>
    </lineage>
</organism>